<organism>
    <name type="scientific">Hahella chejuensis (strain KCTC 2396)</name>
    <dbReference type="NCBI Taxonomy" id="349521"/>
    <lineage>
        <taxon>Bacteria</taxon>
        <taxon>Pseudomonadati</taxon>
        <taxon>Pseudomonadota</taxon>
        <taxon>Gammaproteobacteria</taxon>
        <taxon>Oceanospirillales</taxon>
        <taxon>Hahellaceae</taxon>
        <taxon>Hahella</taxon>
    </lineage>
</organism>
<proteinExistence type="inferred from homology"/>
<name>DUT_HAHCH</name>
<comment type="function">
    <text evidence="1">This enzyme is involved in nucleotide metabolism: it produces dUMP, the immediate precursor of thymidine nucleotides and it decreases the intracellular concentration of dUTP so that uracil cannot be incorporated into DNA.</text>
</comment>
<comment type="catalytic activity">
    <reaction evidence="1">
        <text>dUTP + H2O = dUMP + diphosphate + H(+)</text>
        <dbReference type="Rhea" id="RHEA:10248"/>
        <dbReference type="ChEBI" id="CHEBI:15377"/>
        <dbReference type="ChEBI" id="CHEBI:15378"/>
        <dbReference type="ChEBI" id="CHEBI:33019"/>
        <dbReference type="ChEBI" id="CHEBI:61555"/>
        <dbReference type="ChEBI" id="CHEBI:246422"/>
        <dbReference type="EC" id="3.6.1.23"/>
    </reaction>
</comment>
<comment type="cofactor">
    <cofactor evidence="1">
        <name>Mg(2+)</name>
        <dbReference type="ChEBI" id="CHEBI:18420"/>
    </cofactor>
</comment>
<comment type="pathway">
    <text evidence="1">Pyrimidine metabolism; dUMP biosynthesis; dUMP from dCTP (dUTP route): step 2/2.</text>
</comment>
<comment type="similarity">
    <text evidence="1">Belongs to the dUTPase family.</text>
</comment>
<protein>
    <recommendedName>
        <fullName evidence="1">Deoxyuridine 5'-triphosphate nucleotidohydrolase</fullName>
        <shortName evidence="1">dUTPase</shortName>
        <ecNumber evidence="1">3.6.1.23</ecNumber>
    </recommendedName>
    <alternativeName>
        <fullName evidence="1">dUTP pyrophosphatase</fullName>
    </alternativeName>
</protein>
<reference key="1">
    <citation type="journal article" date="2005" name="Nucleic Acids Res.">
        <title>Genomic blueprint of Hahella chejuensis, a marine microbe producing an algicidal agent.</title>
        <authorList>
            <person name="Jeong H."/>
            <person name="Yim J.H."/>
            <person name="Lee C."/>
            <person name="Choi S.-H."/>
            <person name="Park Y.K."/>
            <person name="Yoon S.H."/>
            <person name="Hur C.-G."/>
            <person name="Kang H.-Y."/>
            <person name="Kim D."/>
            <person name="Lee H.H."/>
            <person name="Park K.H."/>
            <person name="Park S.-H."/>
            <person name="Park H.-S."/>
            <person name="Lee H.K."/>
            <person name="Oh T.K."/>
            <person name="Kim J.F."/>
        </authorList>
    </citation>
    <scope>NUCLEOTIDE SEQUENCE [LARGE SCALE GENOMIC DNA]</scope>
    <source>
        <strain>KCTC 2396</strain>
    </source>
</reference>
<sequence length="152" mass="15929">MKQALLVKVLDKRLGNEIPLPAYATDGSAGLDLRACLAEPVTLQPGETTLIPTGMAIHLSDPGLAAMLLPRSGLGHKHGIVLGNLVGLIDSDYQGEVMVSCWNRGNEAFTISVGERIAQMVIVPVVQVGFEIVDDFDDSSRGAGGFGSTGTK</sequence>
<accession>Q2SN67</accession>
<feature type="chain" id="PRO_1000057773" description="Deoxyuridine 5'-triphosphate nucleotidohydrolase">
    <location>
        <begin position="1"/>
        <end position="152"/>
    </location>
</feature>
<feature type="binding site" evidence="1">
    <location>
        <begin position="71"/>
        <end position="73"/>
    </location>
    <ligand>
        <name>substrate</name>
    </ligand>
</feature>
<feature type="binding site" evidence="1">
    <location>
        <position position="84"/>
    </location>
    <ligand>
        <name>substrate</name>
    </ligand>
</feature>
<feature type="binding site" evidence="1">
    <location>
        <begin position="88"/>
        <end position="90"/>
    </location>
    <ligand>
        <name>substrate</name>
    </ligand>
</feature>
<feature type="binding site" evidence="1">
    <location>
        <position position="98"/>
    </location>
    <ligand>
        <name>substrate</name>
    </ligand>
</feature>
<keyword id="KW-0378">Hydrolase</keyword>
<keyword id="KW-0460">Magnesium</keyword>
<keyword id="KW-0479">Metal-binding</keyword>
<keyword id="KW-0546">Nucleotide metabolism</keyword>
<keyword id="KW-1185">Reference proteome</keyword>
<gene>
    <name evidence="1" type="primary">dut</name>
    <name type="ordered locus">HCH_01022</name>
</gene>
<evidence type="ECO:0000255" key="1">
    <source>
        <dbReference type="HAMAP-Rule" id="MF_00116"/>
    </source>
</evidence>
<dbReference type="EC" id="3.6.1.23" evidence="1"/>
<dbReference type="EMBL" id="CP000155">
    <property type="protein sequence ID" value="ABC27907.1"/>
    <property type="molecule type" value="Genomic_DNA"/>
</dbReference>
<dbReference type="RefSeq" id="WP_011394982.1">
    <property type="nucleotide sequence ID" value="NC_007645.1"/>
</dbReference>
<dbReference type="SMR" id="Q2SN67"/>
<dbReference type="STRING" id="349521.HCH_01022"/>
<dbReference type="KEGG" id="hch:HCH_01022"/>
<dbReference type="eggNOG" id="COG0756">
    <property type="taxonomic scope" value="Bacteria"/>
</dbReference>
<dbReference type="HOGENOM" id="CLU_068508_1_1_6"/>
<dbReference type="OrthoDB" id="9809956at2"/>
<dbReference type="UniPathway" id="UPA00610">
    <property type="reaction ID" value="UER00666"/>
</dbReference>
<dbReference type="Proteomes" id="UP000000238">
    <property type="component" value="Chromosome"/>
</dbReference>
<dbReference type="GO" id="GO:0004170">
    <property type="term" value="F:dUTP diphosphatase activity"/>
    <property type="evidence" value="ECO:0007669"/>
    <property type="project" value="UniProtKB-UniRule"/>
</dbReference>
<dbReference type="GO" id="GO:0000287">
    <property type="term" value="F:magnesium ion binding"/>
    <property type="evidence" value="ECO:0007669"/>
    <property type="project" value="UniProtKB-UniRule"/>
</dbReference>
<dbReference type="GO" id="GO:0006226">
    <property type="term" value="P:dUMP biosynthetic process"/>
    <property type="evidence" value="ECO:0007669"/>
    <property type="project" value="UniProtKB-UniRule"/>
</dbReference>
<dbReference type="GO" id="GO:0046081">
    <property type="term" value="P:dUTP catabolic process"/>
    <property type="evidence" value="ECO:0007669"/>
    <property type="project" value="InterPro"/>
</dbReference>
<dbReference type="CDD" id="cd07557">
    <property type="entry name" value="trimeric_dUTPase"/>
    <property type="match status" value="1"/>
</dbReference>
<dbReference type="FunFam" id="2.70.40.10:FF:000002">
    <property type="entry name" value="dUTP diphosphatase"/>
    <property type="match status" value="1"/>
</dbReference>
<dbReference type="Gene3D" id="2.70.40.10">
    <property type="match status" value="1"/>
</dbReference>
<dbReference type="HAMAP" id="MF_00116">
    <property type="entry name" value="dUTPase_bact"/>
    <property type="match status" value="1"/>
</dbReference>
<dbReference type="InterPro" id="IPR008181">
    <property type="entry name" value="dUTPase"/>
</dbReference>
<dbReference type="InterPro" id="IPR029054">
    <property type="entry name" value="dUTPase-like"/>
</dbReference>
<dbReference type="InterPro" id="IPR036157">
    <property type="entry name" value="dUTPase-like_sf"/>
</dbReference>
<dbReference type="InterPro" id="IPR033704">
    <property type="entry name" value="dUTPase_trimeric"/>
</dbReference>
<dbReference type="NCBIfam" id="TIGR00576">
    <property type="entry name" value="dut"/>
    <property type="match status" value="1"/>
</dbReference>
<dbReference type="NCBIfam" id="NF001862">
    <property type="entry name" value="PRK00601.1"/>
    <property type="match status" value="1"/>
</dbReference>
<dbReference type="PANTHER" id="PTHR11241">
    <property type="entry name" value="DEOXYURIDINE 5'-TRIPHOSPHATE NUCLEOTIDOHYDROLASE"/>
    <property type="match status" value="1"/>
</dbReference>
<dbReference type="PANTHER" id="PTHR11241:SF0">
    <property type="entry name" value="DEOXYURIDINE 5'-TRIPHOSPHATE NUCLEOTIDOHYDROLASE"/>
    <property type="match status" value="1"/>
</dbReference>
<dbReference type="Pfam" id="PF00692">
    <property type="entry name" value="dUTPase"/>
    <property type="match status" value="1"/>
</dbReference>
<dbReference type="SUPFAM" id="SSF51283">
    <property type="entry name" value="dUTPase-like"/>
    <property type="match status" value="1"/>
</dbReference>